<comment type="function">
    <text evidence="1 3 4 7 9 12">Component of the cleavage and polyadenylation specificity factor (CPSF) complex that plays a key role in pre-mRNA 3'-end formation, recognizing the AAUAAA signal sequence and interacting with poly(A) polymerase and other factors to bring about cleavage and poly(A) addition. Has endonuclease activity, and functions as an mRNA 3'-end-processing endonuclease (PubMed:30507380). Also involved in the histone 3'-end pre-mRNA processing (PubMed:30507380). U7 snRNP-dependent protein that induces both the 3'-endoribonucleolytic cleavage of histone pre-mRNAs and acts as a 5' to 3' exonuclease for degrading the subsequent downstream cleavage product (DCP) of mature histone mRNAs. Cleavage occurs after the 5'-ACCCA-3' sequence in the histone pre-mRNA leaving a 3'hydroxyl group on the upstream fragment containing the stem loop (SL) and 5' phosphate on the downstream cleavage product (DCP) starting with CU nucleotides. The U7-dependent 5' to 3' exonuclease activity is processive and degrades the DCP RNA substrate even after complete removal of the U7-binding site. Binds to the downstream cleavage product (DCP) of histone pre-mRNAs and the cleaved DCP RNA substrate in a U7 snRNP dependent manner. Required for entering/progressing through S-phase of the cell cycle (PubMed:30507380). Required for the selective processing of microRNAs (miRNAs) during embryonic stem cell differentiation via its interaction with ISY1 (By similarity). Required for the biogenesis of all miRNAs from the pri-miR-17-92 primary transcript except miR-92a (By similarity). Only required for the biogenesis of miR-290 and miR-96 from the pri-miR-290-295 and pri-miR-96-183 primary transcripts, respectively (By similarity).</text>
</comment>
<comment type="cofactor">
    <cofactor evidence="7">
        <name>Zn(2+)</name>
        <dbReference type="ChEBI" id="CHEBI:29105"/>
    </cofactor>
    <text evidence="7">Binds 2 Zn(2+) ions per subunit.</text>
</comment>
<comment type="subunit">
    <text evidence="1 3 7 9 10 11">Component of the cleavage and polyadenylation specificity factor (CPSF) complex, composed of CPSF1, CPSF2, CPSF3, CPSF4 and FIP1L1. Interacts with CPSF2, CSTF2 and SYMPK. Interacts with TUT1; the interaction is direct and mediates the recruitment of the CPSF complex on the 3'UTR of pre-mRNAs. Interacts with WDR33. Interacts with ZC3H3 (By similarity).</text>
</comment>
<comment type="interaction">
    <interactant intactId="EBI-1044699">
        <id>Q9UKF6</id>
    </interactant>
    <interactant intactId="EBI-466029">
        <id>P42858</id>
        <label>HTT</label>
    </interactant>
    <organismsDiffer>false</organismsDiffer>
    <experiments>3</experiments>
</comment>
<comment type="subcellular location">
    <subcellularLocation>
        <location evidence="4">Nucleus</location>
    </subcellularLocation>
</comment>
<comment type="PTM">
    <text evidence="8">Sumoylated on Lys-462, Lys-465 and Lys-545, preferentially by SUMO3.</text>
</comment>
<comment type="disease" evidence="13">
    <disease id="DI-06424">
        <name>Neurodevelopmental disorder with microcephaly, hypotonia, nystagmus, and seizures</name>
        <acronym>NEDMHS</acronym>
        <description>An autosomal recessive disorder characterized by global developmental delay and impaired intellectual development apparent from infancy. Affected individuals have hypotonia, poor or absent motor skills, feeding difficulties with poor overall growth, microcephaly, mild dysmorphic features, and early-onset seizures. Additional variable features include nystagmus, cortical blindness, and spasticity.</description>
        <dbReference type="MIM" id="619876"/>
    </disease>
    <text>The disease is caused by variants affecting the gene represented in this entry.</text>
</comment>
<comment type="similarity">
    <text evidence="14">Belongs to the metallo-beta-lactamase superfamily. RNA-metabolizing metallo-beta-lactamase-like family. CPSF3 subfamily.</text>
</comment>
<sequence>MSAIPAEESDQLLIRPLGAGQEVGRSCIILEFKGRKIMLDCGIHPGLEGMDALPYIDLIDPAEIDLLLISHFHLDHCGALPWFLQKTSFKGRTFMTHATKAIYRWLLSDYVKVSNISADDMLYTETDLEESMDKIETINFHEVKEVAGIKFWCYHAGHVLGAAMFMIEIAGVKLLYTGDFSRQEDRHLMAAEIPNIKPDILIIESTYGTHIHEKREEREARFCNTVHDIVNRGGRGLIPVFALGRAQELLLILDEYWQNHPELHDIPIYYASSLAKKCMAVYQTYVNAMNDKIRKQININNPFVFKHISNLKSMDHFDDIGPSVVMASPGMMQSGLSRELFESWCTDKRNGVIIAGYCVEGTLAKHIMSEPEEITTMSGQKLPLKMSVDYISFSAHTDYQQTSEFIRALKPPHVILVHGEQNEMARLKAALIREYEDNDEVHIEVHNPRNTEAVTLNFRGEKLAKVMGFLADKKPEQGQRVSGILVKRNFNYHILSPCDLSNYTDLAMSTVKQTQAIPYTGPFNLLCYQLQKLTGDVEELEIQEKPALKVFKNITVIQEPGMVVLEWLANPSNDMYADTVTTVILEVQSNPKIRKGAVQKVSKKLEMHVYSKRLEIMLQDIFGEDCVSVKDDSILSVTVDGKTANLNLETRTVECEEGSEDDESLREMVELAAQRLYEALTPVH</sequence>
<accession>Q9UKF6</accession>
<accession>O14769</accession>
<accession>Q53RS2</accession>
<accession>Q96F36</accession>
<protein>
    <recommendedName>
        <fullName>Cleavage and polyadenylation specificity factor subunit 3</fullName>
        <ecNumber evidence="4 7">3.1.27.-</ecNumber>
    </recommendedName>
    <alternativeName>
        <fullName>Cleavage and polyadenylation specificity factor 73 kDa subunit</fullName>
        <shortName>CPSF 73 kDa subunit</shortName>
    </alternativeName>
    <alternativeName>
        <fullName>mRNA 3'-end-processing endonuclease CPSF-73</fullName>
    </alternativeName>
</protein>
<dbReference type="EC" id="3.1.27.-" evidence="4 7"/>
<dbReference type="EMBL" id="AF171877">
    <property type="protein sequence ID" value="AAF00224.1"/>
    <property type="molecule type" value="mRNA"/>
</dbReference>
<dbReference type="EMBL" id="AC080162">
    <property type="protein sequence ID" value="AAY14858.1"/>
    <property type="molecule type" value="Genomic_DNA"/>
</dbReference>
<dbReference type="EMBL" id="CH471053">
    <property type="protein sequence ID" value="EAX00989.1"/>
    <property type="molecule type" value="Genomic_DNA"/>
</dbReference>
<dbReference type="EMBL" id="BC011654">
    <property type="protein sequence ID" value="AAH11654.1"/>
    <property type="molecule type" value="mRNA"/>
</dbReference>
<dbReference type="EMBL" id="BC020211">
    <property type="protein sequence ID" value="AAH20211.1"/>
    <property type="molecule type" value="mRNA"/>
</dbReference>
<dbReference type="EMBL" id="AF017269">
    <property type="protein sequence ID" value="AAB70268.1"/>
    <property type="molecule type" value="mRNA"/>
</dbReference>
<dbReference type="CCDS" id="CCDS1664.1"/>
<dbReference type="RefSeq" id="NP_057291.1">
    <property type="nucleotide sequence ID" value="NM_016207.4"/>
</dbReference>
<dbReference type="PDB" id="2I7T">
    <property type="method" value="X-ray"/>
    <property type="resolution" value="2.10 A"/>
    <property type="chains" value="A=1-459"/>
</dbReference>
<dbReference type="PDB" id="2I7V">
    <property type="method" value="X-ray"/>
    <property type="resolution" value="2.10 A"/>
    <property type="chains" value="A=1-459"/>
</dbReference>
<dbReference type="PDB" id="6M8Q">
    <property type="method" value="X-ray"/>
    <property type="resolution" value="2.49 A"/>
    <property type="chains" value="A/B=1-459"/>
</dbReference>
<dbReference type="PDB" id="6V4X">
    <property type="method" value="EM"/>
    <property type="resolution" value="3.20 A"/>
    <property type="chains" value="H=1-684"/>
</dbReference>
<dbReference type="PDB" id="8T1Q">
    <property type="method" value="X-ray"/>
    <property type="resolution" value="1.70 A"/>
    <property type="chains" value="A=1-459"/>
</dbReference>
<dbReference type="PDB" id="8T1R">
    <property type="method" value="X-ray"/>
    <property type="resolution" value="2.20 A"/>
    <property type="chains" value="A=1-459"/>
</dbReference>
<dbReference type="PDBsum" id="2I7T"/>
<dbReference type="PDBsum" id="2I7V"/>
<dbReference type="PDBsum" id="6M8Q"/>
<dbReference type="PDBsum" id="6V4X"/>
<dbReference type="PDBsum" id="8T1Q"/>
<dbReference type="PDBsum" id="8T1R"/>
<dbReference type="EMDB" id="EMD-12159"/>
<dbReference type="EMDB" id="EMD-12163"/>
<dbReference type="EMDB" id="EMD-12164"/>
<dbReference type="EMDB" id="EMD-14185"/>
<dbReference type="EMDB" id="EMD-20859"/>
<dbReference type="EMDB" id="EMD-21050"/>
<dbReference type="SMR" id="Q9UKF6"/>
<dbReference type="BioGRID" id="119680">
    <property type="interactions" value="150"/>
</dbReference>
<dbReference type="ComplexPortal" id="CPX-2694">
    <property type="entry name" value="Histone pre-RNA core cleavage complex"/>
</dbReference>
<dbReference type="ComplexPortal" id="CPX-2698">
    <property type="entry name" value="pre-mRNA cleavage and polyadenylation specificity factor complex"/>
</dbReference>
<dbReference type="CORUM" id="Q9UKF6"/>
<dbReference type="DIP" id="DIP-42501N"/>
<dbReference type="FunCoup" id="Q9UKF6">
    <property type="interactions" value="3185"/>
</dbReference>
<dbReference type="IntAct" id="Q9UKF6">
    <property type="interactions" value="69"/>
</dbReference>
<dbReference type="MINT" id="Q9UKF6"/>
<dbReference type="STRING" id="9606.ENSP00000238112"/>
<dbReference type="GlyGen" id="Q9UKF6">
    <property type="glycosylation" value="1 site, 1 O-linked glycan (1 site)"/>
</dbReference>
<dbReference type="iPTMnet" id="Q9UKF6"/>
<dbReference type="PhosphoSitePlus" id="Q9UKF6"/>
<dbReference type="SwissPalm" id="Q9UKF6"/>
<dbReference type="BioMuta" id="CPSF3"/>
<dbReference type="DMDM" id="18203503"/>
<dbReference type="jPOST" id="Q9UKF6"/>
<dbReference type="MassIVE" id="Q9UKF6"/>
<dbReference type="PaxDb" id="9606-ENSP00000238112"/>
<dbReference type="PeptideAtlas" id="Q9UKF6"/>
<dbReference type="ProteomicsDB" id="84782"/>
<dbReference type="Pumba" id="Q9UKF6"/>
<dbReference type="Antibodypedia" id="12409">
    <property type="antibodies" value="236 antibodies from 27 providers"/>
</dbReference>
<dbReference type="DNASU" id="51692"/>
<dbReference type="Ensembl" id="ENST00000238112.8">
    <property type="protein sequence ID" value="ENSP00000238112.3"/>
    <property type="gene ID" value="ENSG00000119203.14"/>
</dbReference>
<dbReference type="GeneID" id="51692"/>
<dbReference type="KEGG" id="hsa:51692"/>
<dbReference type="MANE-Select" id="ENST00000238112.8">
    <property type="protein sequence ID" value="ENSP00000238112.3"/>
    <property type="RefSeq nucleotide sequence ID" value="NM_016207.4"/>
    <property type="RefSeq protein sequence ID" value="NP_057291.1"/>
</dbReference>
<dbReference type="UCSC" id="uc002qzo.3">
    <property type="organism name" value="human"/>
</dbReference>
<dbReference type="AGR" id="HGNC:2326"/>
<dbReference type="CTD" id="51692"/>
<dbReference type="DisGeNET" id="51692"/>
<dbReference type="GeneCards" id="CPSF3"/>
<dbReference type="HGNC" id="HGNC:2326">
    <property type="gene designation" value="CPSF3"/>
</dbReference>
<dbReference type="HPA" id="ENSG00000119203">
    <property type="expression patterns" value="Low tissue specificity"/>
</dbReference>
<dbReference type="MalaCards" id="CPSF3"/>
<dbReference type="MIM" id="606029">
    <property type="type" value="gene"/>
</dbReference>
<dbReference type="MIM" id="619876">
    <property type="type" value="phenotype"/>
</dbReference>
<dbReference type="neXtProt" id="NX_Q9UKF6"/>
<dbReference type="OpenTargets" id="ENSG00000119203"/>
<dbReference type="Orphanet" id="528084">
    <property type="disease" value="Non-specific syndromic intellectual disability"/>
</dbReference>
<dbReference type="PharmGKB" id="PA26843"/>
<dbReference type="VEuPathDB" id="HostDB:ENSG00000119203"/>
<dbReference type="eggNOG" id="KOG1137">
    <property type="taxonomic scope" value="Eukaryota"/>
</dbReference>
<dbReference type="GeneTree" id="ENSGT00940000155699"/>
<dbReference type="HOGENOM" id="CLU_009673_2_3_1"/>
<dbReference type="InParanoid" id="Q9UKF6"/>
<dbReference type="OMA" id="TRSVECE"/>
<dbReference type="OrthoDB" id="10249535at2759"/>
<dbReference type="PAN-GO" id="Q9UKF6">
    <property type="GO annotations" value="6 GO annotations based on evolutionary models"/>
</dbReference>
<dbReference type="PhylomeDB" id="Q9UKF6"/>
<dbReference type="TreeFam" id="TF105643"/>
<dbReference type="PathwayCommons" id="Q9UKF6"/>
<dbReference type="Reactome" id="R-HSA-159231">
    <property type="pathway name" value="Transport of Mature mRNA Derived from an Intronless Transcript"/>
</dbReference>
<dbReference type="Reactome" id="R-HSA-72187">
    <property type="pathway name" value="mRNA 3'-end processing"/>
</dbReference>
<dbReference type="Reactome" id="R-HSA-72203">
    <property type="pathway name" value="Processing of Capped Intron-Containing Pre-mRNA"/>
</dbReference>
<dbReference type="Reactome" id="R-HSA-73856">
    <property type="pathway name" value="RNA Polymerase II Transcription Termination"/>
</dbReference>
<dbReference type="Reactome" id="R-HSA-77595">
    <property type="pathway name" value="Processing of Intronless Pre-mRNAs"/>
</dbReference>
<dbReference type="SignaLink" id="Q9UKF6"/>
<dbReference type="SIGNOR" id="Q9UKF6"/>
<dbReference type="BioGRID-ORCS" id="51692">
    <property type="hits" value="830 hits in 1155 CRISPR screens"/>
</dbReference>
<dbReference type="CD-CODE" id="24B72B50">
    <property type="entry name" value="Histone Locus Body"/>
</dbReference>
<dbReference type="CD-CODE" id="DEE660B4">
    <property type="entry name" value="Stress granule"/>
</dbReference>
<dbReference type="ChiTaRS" id="CPSF3">
    <property type="organism name" value="human"/>
</dbReference>
<dbReference type="EvolutionaryTrace" id="Q9UKF6"/>
<dbReference type="GeneWiki" id="CPSF3"/>
<dbReference type="GenomeRNAi" id="51692"/>
<dbReference type="Pharos" id="Q9UKF6">
    <property type="development level" value="Tchem"/>
</dbReference>
<dbReference type="PRO" id="PR:Q9UKF6"/>
<dbReference type="Proteomes" id="UP000005640">
    <property type="component" value="Chromosome 2"/>
</dbReference>
<dbReference type="RNAct" id="Q9UKF6">
    <property type="molecule type" value="protein"/>
</dbReference>
<dbReference type="Bgee" id="ENSG00000119203">
    <property type="expression patterns" value="Expressed in ganglionic eminence and 186 other cell types or tissues"/>
</dbReference>
<dbReference type="ExpressionAtlas" id="Q9UKF6">
    <property type="expression patterns" value="baseline and differential"/>
</dbReference>
<dbReference type="GO" id="GO:0005847">
    <property type="term" value="C:mRNA cleavage and polyadenylation specificity factor complex"/>
    <property type="evidence" value="ECO:0000314"/>
    <property type="project" value="UniProtKB"/>
</dbReference>
<dbReference type="GO" id="GO:0005654">
    <property type="term" value="C:nucleoplasm"/>
    <property type="evidence" value="ECO:0000304"/>
    <property type="project" value="Reactome"/>
</dbReference>
<dbReference type="GO" id="GO:1990904">
    <property type="term" value="C:ribonucleoprotein complex"/>
    <property type="evidence" value="ECO:0007669"/>
    <property type="project" value="UniProtKB-KW"/>
</dbReference>
<dbReference type="GO" id="GO:0004534">
    <property type="term" value="F:5'-3' RNA exonuclease activity"/>
    <property type="evidence" value="ECO:0000250"/>
    <property type="project" value="UniProtKB"/>
</dbReference>
<dbReference type="GO" id="GO:0046872">
    <property type="term" value="F:metal ion binding"/>
    <property type="evidence" value="ECO:0000315"/>
    <property type="project" value="UniProtKB"/>
</dbReference>
<dbReference type="GO" id="GO:0003723">
    <property type="term" value="F:RNA binding"/>
    <property type="evidence" value="ECO:0000250"/>
    <property type="project" value="UniProtKB"/>
</dbReference>
<dbReference type="GO" id="GO:0004521">
    <property type="term" value="F:RNA endonuclease activity"/>
    <property type="evidence" value="ECO:0000315"/>
    <property type="project" value="UniProtKB"/>
</dbReference>
<dbReference type="GO" id="GO:0180010">
    <property type="term" value="P:co-transcriptional mRNA 3'-end processing, cleavage and polyadenylation pathway"/>
    <property type="evidence" value="ECO:0000314"/>
    <property type="project" value="UniProtKB"/>
</dbReference>
<dbReference type="GO" id="GO:0031124">
    <property type="term" value="P:mRNA 3'-end processing"/>
    <property type="evidence" value="ECO:0000315"/>
    <property type="project" value="UniProtKB"/>
</dbReference>
<dbReference type="GO" id="GO:0006398">
    <property type="term" value="P:mRNA 3'-end processing by stem-loop binding and cleavage"/>
    <property type="evidence" value="ECO:0000314"/>
    <property type="project" value="UniProtKB"/>
</dbReference>
<dbReference type="GO" id="GO:1900087">
    <property type="term" value="P:positive regulation of G1/S transition of mitotic cell cycle"/>
    <property type="evidence" value="ECO:0000315"/>
    <property type="project" value="UniProtKB"/>
</dbReference>
<dbReference type="CDD" id="cd16292">
    <property type="entry name" value="CPSF3-like_MBL-fold"/>
    <property type="match status" value="1"/>
</dbReference>
<dbReference type="FunFam" id="3.40.50.10890:FF:000001">
    <property type="entry name" value="Cleavage and polyadenylation specificity factor subunit 3"/>
    <property type="match status" value="1"/>
</dbReference>
<dbReference type="FunFam" id="3.60.15.10:FF:000005">
    <property type="entry name" value="Cleavage and polyadenylation specificity factor subunit 3"/>
    <property type="match status" value="1"/>
</dbReference>
<dbReference type="Gene3D" id="3.40.50.10890">
    <property type="match status" value="1"/>
</dbReference>
<dbReference type="Gene3D" id="3.60.15.10">
    <property type="entry name" value="Ribonuclease Z/Hydroxyacylglutathione hydrolase-like"/>
    <property type="match status" value="1"/>
</dbReference>
<dbReference type="InterPro" id="IPR022712">
    <property type="entry name" value="Beta_Casp"/>
</dbReference>
<dbReference type="InterPro" id="IPR021718">
    <property type="entry name" value="CPSF73-100_C"/>
</dbReference>
<dbReference type="InterPro" id="IPR050698">
    <property type="entry name" value="MBL"/>
</dbReference>
<dbReference type="InterPro" id="IPR001279">
    <property type="entry name" value="Metallo-B-lactamas"/>
</dbReference>
<dbReference type="InterPro" id="IPR036866">
    <property type="entry name" value="RibonucZ/Hydroxyglut_hydro"/>
</dbReference>
<dbReference type="InterPro" id="IPR011108">
    <property type="entry name" value="RMMBL"/>
</dbReference>
<dbReference type="PANTHER" id="PTHR11203">
    <property type="entry name" value="CLEAVAGE AND POLYADENYLATION SPECIFICITY FACTOR FAMILY MEMBER"/>
    <property type="match status" value="1"/>
</dbReference>
<dbReference type="PANTHER" id="PTHR11203:SF11">
    <property type="entry name" value="CLEAVAGE AND POLYADENYLATION SPECIFICITY FACTOR SUBUNIT 3"/>
    <property type="match status" value="1"/>
</dbReference>
<dbReference type="Pfam" id="PF10996">
    <property type="entry name" value="Beta-Casp"/>
    <property type="match status" value="1"/>
</dbReference>
<dbReference type="Pfam" id="PF11718">
    <property type="entry name" value="CPSF73-100_C"/>
    <property type="match status" value="1"/>
</dbReference>
<dbReference type="Pfam" id="PF00753">
    <property type="entry name" value="Lactamase_B"/>
    <property type="match status" value="1"/>
</dbReference>
<dbReference type="Pfam" id="PF07521">
    <property type="entry name" value="RMMBL"/>
    <property type="match status" value="1"/>
</dbReference>
<dbReference type="SMART" id="SM01027">
    <property type="entry name" value="Beta-Casp"/>
    <property type="match status" value="1"/>
</dbReference>
<dbReference type="SMART" id="SM01098">
    <property type="entry name" value="CPSF73-100_C"/>
    <property type="match status" value="1"/>
</dbReference>
<dbReference type="SMART" id="SM00849">
    <property type="entry name" value="Lactamase_B"/>
    <property type="match status" value="1"/>
</dbReference>
<dbReference type="SUPFAM" id="SSF56281">
    <property type="entry name" value="Metallo-hydrolase/oxidoreductase"/>
    <property type="match status" value="1"/>
</dbReference>
<reference key="1">
    <citation type="submission" date="1999-07" db="EMBL/GenBank/DDBJ databases">
        <title>Homo sapiens mRNA for CPSF (cleavage and polyadenylation specificity factor) 73 kDa subunit.</title>
        <authorList>
            <person name="Yu S."/>
            <person name="Chen W."/>
            <person name="Pang X."/>
            <person name="Dong X."/>
            <person name="Wang H."/>
        </authorList>
    </citation>
    <scope>NUCLEOTIDE SEQUENCE [MRNA]</scope>
    <source>
        <tissue>Hepatoma</tissue>
    </source>
</reference>
<reference key="2">
    <citation type="journal article" date="2005" name="Nature">
        <title>Generation and annotation of the DNA sequences of human chromosomes 2 and 4.</title>
        <authorList>
            <person name="Hillier L.W."/>
            <person name="Graves T.A."/>
            <person name="Fulton R.S."/>
            <person name="Fulton L.A."/>
            <person name="Pepin K.H."/>
            <person name="Minx P."/>
            <person name="Wagner-McPherson C."/>
            <person name="Layman D."/>
            <person name="Wylie K."/>
            <person name="Sekhon M."/>
            <person name="Becker M.C."/>
            <person name="Fewell G.A."/>
            <person name="Delehaunty K.D."/>
            <person name="Miner T.L."/>
            <person name="Nash W.E."/>
            <person name="Kremitzki C."/>
            <person name="Oddy L."/>
            <person name="Du H."/>
            <person name="Sun H."/>
            <person name="Bradshaw-Cordum H."/>
            <person name="Ali J."/>
            <person name="Carter J."/>
            <person name="Cordes M."/>
            <person name="Harris A."/>
            <person name="Isak A."/>
            <person name="van Brunt A."/>
            <person name="Nguyen C."/>
            <person name="Du F."/>
            <person name="Courtney L."/>
            <person name="Kalicki J."/>
            <person name="Ozersky P."/>
            <person name="Abbott S."/>
            <person name="Armstrong J."/>
            <person name="Belter E.A."/>
            <person name="Caruso L."/>
            <person name="Cedroni M."/>
            <person name="Cotton M."/>
            <person name="Davidson T."/>
            <person name="Desai A."/>
            <person name="Elliott G."/>
            <person name="Erb T."/>
            <person name="Fronick C."/>
            <person name="Gaige T."/>
            <person name="Haakenson W."/>
            <person name="Haglund K."/>
            <person name="Holmes A."/>
            <person name="Harkins R."/>
            <person name="Kim K."/>
            <person name="Kruchowski S.S."/>
            <person name="Strong C.M."/>
            <person name="Grewal N."/>
            <person name="Goyea E."/>
            <person name="Hou S."/>
            <person name="Levy A."/>
            <person name="Martinka S."/>
            <person name="Mead K."/>
            <person name="McLellan M.D."/>
            <person name="Meyer R."/>
            <person name="Randall-Maher J."/>
            <person name="Tomlinson C."/>
            <person name="Dauphin-Kohlberg S."/>
            <person name="Kozlowicz-Reilly A."/>
            <person name="Shah N."/>
            <person name="Swearengen-Shahid S."/>
            <person name="Snider J."/>
            <person name="Strong J.T."/>
            <person name="Thompson J."/>
            <person name="Yoakum M."/>
            <person name="Leonard S."/>
            <person name="Pearman C."/>
            <person name="Trani L."/>
            <person name="Radionenko M."/>
            <person name="Waligorski J.E."/>
            <person name="Wang C."/>
            <person name="Rock S.M."/>
            <person name="Tin-Wollam A.-M."/>
            <person name="Maupin R."/>
            <person name="Latreille P."/>
            <person name="Wendl M.C."/>
            <person name="Yang S.-P."/>
            <person name="Pohl C."/>
            <person name="Wallis J.W."/>
            <person name="Spieth J."/>
            <person name="Bieri T.A."/>
            <person name="Berkowicz N."/>
            <person name="Nelson J.O."/>
            <person name="Osborne J."/>
            <person name="Ding L."/>
            <person name="Meyer R."/>
            <person name="Sabo A."/>
            <person name="Shotland Y."/>
            <person name="Sinha P."/>
            <person name="Wohldmann P.E."/>
            <person name="Cook L.L."/>
            <person name="Hickenbotham M.T."/>
            <person name="Eldred J."/>
            <person name="Williams D."/>
            <person name="Jones T.A."/>
            <person name="She X."/>
            <person name="Ciccarelli F.D."/>
            <person name="Izaurralde E."/>
            <person name="Taylor J."/>
            <person name="Schmutz J."/>
            <person name="Myers R.M."/>
            <person name="Cox D.R."/>
            <person name="Huang X."/>
            <person name="McPherson J.D."/>
            <person name="Mardis E.R."/>
            <person name="Clifton S.W."/>
            <person name="Warren W.C."/>
            <person name="Chinwalla A.T."/>
            <person name="Eddy S.R."/>
            <person name="Marra M.A."/>
            <person name="Ovcharenko I."/>
            <person name="Furey T.S."/>
            <person name="Miller W."/>
            <person name="Eichler E.E."/>
            <person name="Bork P."/>
            <person name="Suyama M."/>
            <person name="Torrents D."/>
            <person name="Waterston R.H."/>
            <person name="Wilson R.K."/>
        </authorList>
    </citation>
    <scope>NUCLEOTIDE SEQUENCE [LARGE SCALE GENOMIC DNA]</scope>
</reference>
<reference key="3">
    <citation type="submission" date="2005-07" db="EMBL/GenBank/DDBJ databases">
        <authorList>
            <person name="Mural R.J."/>
            <person name="Istrail S."/>
            <person name="Sutton G.G."/>
            <person name="Florea L."/>
            <person name="Halpern A.L."/>
            <person name="Mobarry C.M."/>
            <person name="Lippert R."/>
            <person name="Walenz B."/>
            <person name="Shatkay H."/>
            <person name="Dew I."/>
            <person name="Miller J.R."/>
            <person name="Flanigan M.J."/>
            <person name="Edwards N.J."/>
            <person name="Bolanos R."/>
            <person name="Fasulo D."/>
            <person name="Halldorsson B.V."/>
            <person name="Hannenhalli S."/>
            <person name="Turner R."/>
            <person name="Yooseph S."/>
            <person name="Lu F."/>
            <person name="Nusskern D.R."/>
            <person name="Shue B.C."/>
            <person name="Zheng X.H."/>
            <person name="Zhong F."/>
            <person name="Delcher A.L."/>
            <person name="Huson D.H."/>
            <person name="Kravitz S.A."/>
            <person name="Mouchard L."/>
            <person name="Reinert K."/>
            <person name="Remington K.A."/>
            <person name="Clark A.G."/>
            <person name="Waterman M.S."/>
            <person name="Eichler E.E."/>
            <person name="Adams M.D."/>
            <person name="Hunkapiller M.W."/>
            <person name="Myers E.W."/>
            <person name="Venter J.C."/>
        </authorList>
    </citation>
    <scope>NUCLEOTIDE SEQUENCE [LARGE SCALE GENOMIC DNA]</scope>
</reference>
<reference key="4">
    <citation type="journal article" date="2004" name="Genome Res.">
        <title>The status, quality, and expansion of the NIH full-length cDNA project: the Mammalian Gene Collection (MGC).</title>
        <authorList>
            <consortium name="The MGC Project Team"/>
        </authorList>
    </citation>
    <scope>NUCLEOTIDE SEQUENCE [LARGE SCALE MRNA]</scope>
    <scope>VARIANT GLY-142</scope>
    <source>
        <tissue>Brain</tissue>
        <tissue>Uterus</tissue>
    </source>
</reference>
<reference key="5">
    <citation type="submission" date="1997-08" db="EMBL/GenBank/DDBJ databases">
        <title>H. sapiens mRNA for the 73 kDa subunit of CPSF (cleavage and polyadenylation specificity factor, partial cds).</title>
        <authorList>
            <person name="Pusch W."/>
        </authorList>
    </citation>
    <scope>NUCLEOTIDE SEQUENCE [MRNA] OF 120-498</scope>
</reference>
<reference key="6">
    <citation type="journal article" date="2004" name="EMBO J.">
        <title>Human Fip1 is a subunit of CPSF that binds to U-rich RNA elements and stimulates poly(A) polymerase.</title>
        <authorList>
            <person name="Kaufmann I."/>
            <person name="Martin G."/>
            <person name="Friedlein A."/>
            <person name="Langen H."/>
            <person name="Keller W."/>
        </authorList>
    </citation>
    <scope>FUNCTION IN PRE-MRNA 3'-END PROCESSING</scope>
    <scope>IDENTIFICATION IN THE CPSF COMPLEX</scope>
</reference>
<reference key="7">
    <citation type="journal article" date="2004" name="RNA">
        <title>Evidence that polyadenylation factor CPSF-73 is the mRNA 3' processing endonuclease.</title>
        <authorList>
            <person name="Ryan K."/>
            <person name="Calvo O."/>
            <person name="Manley J.L."/>
        </authorList>
    </citation>
    <scope>FUNCTION</scope>
    <scope>SUBCELLULAR LOCATION</scope>
    <scope>CATALYTIC ACTIVITY</scope>
</reference>
<reference key="8">
    <citation type="journal article" date="2007" name="Mol. Cell. Biol.">
        <title>Sumoylation modulates the assembly and activity of the pre-mRNA 3' processing complex.</title>
        <authorList>
            <person name="Vethantham V."/>
            <person name="Rao N."/>
            <person name="Manley J.L."/>
        </authorList>
    </citation>
    <scope>SUMOYLATION AT LYS-462; LYS-465 AND LYS-545</scope>
    <scope>MUTAGENESIS OF LYS-462; LYS-465 AND LYS-545</scope>
</reference>
<reference key="9">
    <citation type="journal article" date="2008" name="EMBO Rep.">
        <title>Conserved motifs in both CPSF73 and CPSF100 are required to assemble the active endonuclease for histone mRNA 3'-end maturation.</title>
        <authorList>
            <person name="Kolev N.G."/>
            <person name="Yario T.A."/>
            <person name="Benson E."/>
            <person name="Steitz J.A."/>
        </authorList>
    </citation>
    <scope>FUNCTION</scope>
    <scope>INTERACTION WITH CPSF2; CSTF2 AND SYMPK</scope>
    <scope>MUTAGENESIS OF HIS-73; ASP-75; HIS-76; SER-334 AND HIS-396</scope>
</reference>
<reference key="10">
    <citation type="journal article" date="2009" name="Anal. Chem.">
        <title>Lys-N and trypsin cover complementary parts of the phosphoproteome in a refined SCX-based approach.</title>
        <authorList>
            <person name="Gauci S."/>
            <person name="Helbig A.O."/>
            <person name="Slijper M."/>
            <person name="Krijgsveld J."/>
            <person name="Heck A.J."/>
            <person name="Mohammed S."/>
        </authorList>
    </citation>
    <scope>ACETYLATION [LARGE SCALE ANALYSIS] AT SER-2</scope>
    <scope>CLEAVAGE OF INITIATOR METHIONINE [LARGE SCALE ANALYSIS]</scope>
    <scope>IDENTIFICATION BY MASS SPECTROMETRY [LARGE SCALE ANALYSIS]</scope>
</reference>
<reference key="11">
    <citation type="journal article" date="2009" name="Mol. Cell">
        <title>Molecular architecture of the human pre-mRNA 3' processing complex.</title>
        <authorList>
            <person name="Shi Y."/>
            <person name="Di Giammartino D.C."/>
            <person name="Taylor D."/>
            <person name="Sarkeshik A."/>
            <person name="Rice W.J."/>
            <person name="Yates J.R. III"/>
            <person name="Frank J."/>
            <person name="Manley J.L."/>
        </authorList>
    </citation>
    <scope>INTERACTION WITH WDR33</scope>
</reference>
<reference key="12">
    <citation type="journal article" date="2010" name="EMBO J.">
        <title>The poly A polymerase Star-PAP controls 3'-end cleavage by promoting CPSF interaction and specificity toward the pre-mRNA.</title>
        <authorList>
            <person name="Laishram R.S."/>
            <person name="Anderson R.A."/>
        </authorList>
    </citation>
    <scope>IDENTIFICATION IN THE CPSF COMPLEX</scope>
    <scope>INTERACTION WITH TUT1</scope>
</reference>
<reference key="13">
    <citation type="journal article" date="2010" name="Sci. Signal.">
        <title>Quantitative phosphoproteomics reveals widespread full phosphorylation site occupancy during mitosis.</title>
        <authorList>
            <person name="Olsen J.V."/>
            <person name="Vermeulen M."/>
            <person name="Santamaria A."/>
            <person name="Kumar C."/>
            <person name="Miller M.L."/>
            <person name="Jensen L.J."/>
            <person name="Gnad F."/>
            <person name="Cox J."/>
            <person name="Jensen T.S."/>
            <person name="Nigg E.A."/>
            <person name="Brunak S."/>
            <person name="Mann M."/>
        </authorList>
    </citation>
    <scope>PHOSPHORYLATION [LARGE SCALE ANALYSIS] AT THR-681</scope>
    <scope>IDENTIFICATION BY MASS SPECTROMETRY [LARGE SCALE ANALYSIS]</scope>
    <source>
        <tissue>Cervix carcinoma</tissue>
    </source>
</reference>
<reference key="14">
    <citation type="journal article" date="2011" name="BMC Syst. Biol.">
        <title>Initial characterization of the human central proteome.</title>
        <authorList>
            <person name="Burkard T.R."/>
            <person name="Planyavsky M."/>
            <person name="Kaupe I."/>
            <person name="Breitwieser F.P."/>
            <person name="Buerckstuemmer T."/>
            <person name="Bennett K.L."/>
            <person name="Superti-Furga G."/>
            <person name="Colinge J."/>
        </authorList>
    </citation>
    <scope>IDENTIFICATION BY MASS SPECTROMETRY [LARGE SCALE ANALYSIS]</scope>
</reference>
<reference key="15">
    <citation type="journal article" date="2012" name="Mol. Cell. Proteomics">
        <title>Comparative large-scale characterisation of plant vs. mammal proteins reveals similar and idiosyncratic N-alpha acetylation features.</title>
        <authorList>
            <person name="Bienvenut W.V."/>
            <person name="Sumpton D."/>
            <person name="Martinez A."/>
            <person name="Lilla S."/>
            <person name="Espagne C."/>
            <person name="Meinnel T."/>
            <person name="Giglione C."/>
        </authorList>
    </citation>
    <scope>ACETYLATION [LARGE SCALE ANALYSIS] AT SER-2</scope>
    <scope>CLEAVAGE OF INITIATOR METHIONINE [LARGE SCALE ANALYSIS]</scope>
    <scope>IDENTIFICATION BY MASS SPECTROMETRY [LARGE SCALE ANALYSIS]</scope>
</reference>
<reference key="16">
    <citation type="journal article" date="2013" name="J. Proteome Res.">
        <title>Toward a comprehensive characterization of a human cancer cell phosphoproteome.</title>
        <authorList>
            <person name="Zhou H."/>
            <person name="Di Palma S."/>
            <person name="Preisinger C."/>
            <person name="Peng M."/>
            <person name="Polat A.N."/>
            <person name="Heck A.J."/>
            <person name="Mohammed S."/>
        </authorList>
    </citation>
    <scope>PHOSPHORYLATION [LARGE SCALE ANALYSIS] AT THR-681</scope>
    <scope>IDENTIFICATION BY MASS SPECTROMETRY [LARGE SCALE ANALYSIS]</scope>
    <source>
        <tissue>Erythroleukemia</tissue>
    </source>
</reference>
<reference key="17">
    <citation type="journal article" date="2014" name="J. Proteomics">
        <title>An enzyme assisted RP-RPLC approach for in-depth analysis of human liver phosphoproteome.</title>
        <authorList>
            <person name="Bian Y."/>
            <person name="Song C."/>
            <person name="Cheng K."/>
            <person name="Dong M."/>
            <person name="Wang F."/>
            <person name="Huang J."/>
            <person name="Sun D."/>
            <person name="Wang L."/>
            <person name="Ye M."/>
            <person name="Zou H."/>
        </authorList>
    </citation>
    <scope>IDENTIFICATION BY MASS SPECTROMETRY [LARGE SCALE ANALYSIS]</scope>
    <source>
        <tissue>Liver</tissue>
    </source>
</reference>
<reference key="18">
    <citation type="journal article" date="2018" name="Elife">
        <title>Biosynthesis of histone messenger RNA employs a specific 3' end endonuclease.</title>
        <authorList>
            <person name="Pettinati I."/>
            <person name="Grzechnik P."/>
            <person name="Ribeiro de Almeida C."/>
            <person name="Brem J."/>
            <person name="McDonough M.A."/>
            <person name="Dhir S."/>
            <person name="Proudfoot N.J."/>
            <person name="Schofield C.J."/>
        </authorList>
    </citation>
    <scope>FUNCTION</scope>
</reference>
<reference key="19">
    <citation type="journal article" date="2006" name="Nature">
        <title>Polyadenylation factor CPSF-73 is the pre-mRNA 3'-end-processing endonuclease.</title>
        <authorList>
            <person name="Mandel C.R."/>
            <person name="Kaneko S."/>
            <person name="Zhang H."/>
            <person name="Gebauer D."/>
            <person name="Vethantham V."/>
            <person name="Manley J.L."/>
            <person name="Tong L."/>
        </authorList>
    </citation>
    <scope>X-RAY CRYSTALLOGRAPHY (2.1 ANGSTROMS) OF 1-459 IN COMPLEX WITH ZINC IONS</scope>
    <scope>FUNCTION</scope>
    <scope>MUTAGENESIS OF 75-ASP-HIS-76</scope>
    <scope>COFACTOR</scope>
    <scope>CATALYTIC ACTIVITY</scope>
</reference>
<reference key="20">
    <citation type="journal article" date="2006" name="Science">
        <title>The consensus coding sequences of human breast and colorectal cancers.</title>
        <authorList>
            <person name="Sjoeblom T."/>
            <person name="Jones S."/>
            <person name="Wood L.D."/>
            <person name="Parsons D.W."/>
            <person name="Lin J."/>
            <person name="Barber T.D."/>
            <person name="Mandelker D."/>
            <person name="Leary R.J."/>
            <person name="Ptak J."/>
            <person name="Silliman N."/>
            <person name="Szabo S."/>
            <person name="Buckhaults P."/>
            <person name="Farrell C."/>
            <person name="Meeh P."/>
            <person name="Markowitz S.D."/>
            <person name="Willis J."/>
            <person name="Dawson D."/>
            <person name="Willson J.K.V."/>
            <person name="Gazdar A.F."/>
            <person name="Hartigan J."/>
            <person name="Wu L."/>
            <person name="Liu C."/>
            <person name="Parmigiani G."/>
            <person name="Park B.H."/>
            <person name="Bachman K.E."/>
            <person name="Papadopoulos N."/>
            <person name="Vogelstein B."/>
            <person name="Kinzler K.W."/>
            <person name="Velculescu V.E."/>
        </authorList>
    </citation>
    <scope>VARIANT [LARGE SCALE ANALYSIS] ASN-578</scope>
</reference>
<reference key="21">
    <citation type="journal article" date="2022" name="Nat. Commun.">
        <title>Population-level deficit of homozygosity unveils CPSF3 as an intellectual disability syndrome gene.</title>
        <authorList>
            <person name="Arnadottir G.A."/>
            <person name="Oddsson A."/>
            <person name="Jensson B.O."/>
            <person name="Gisladottir S."/>
            <person name="Simon M.T."/>
            <person name="Arnthorsson A.O."/>
            <person name="Katrinardottir H."/>
            <person name="Fridriksdottir R."/>
            <person name="Ivarsdottir E.V."/>
            <person name="Jonasdottir A."/>
            <person name="Jonasdottir A."/>
            <person name="Barrick R."/>
            <person name="Saemundsdottir J."/>
            <person name="le Roux L."/>
            <person name="Oskarsson G.R."/>
            <person name="Asmundsson J."/>
            <person name="Steffensen T."/>
            <person name="Gudmundsson K.R."/>
            <person name="Ludvigsson P."/>
            <person name="Jonsson J.J."/>
            <person name="Masson G."/>
            <person name="Jonsdottir I."/>
            <person name="Holm H."/>
            <person name="Jonasson J.G."/>
            <person name="Magnusson O.T."/>
            <person name="Thorarensen O."/>
            <person name="Abdenur J."/>
            <person name="Norddahl G.L."/>
            <person name="Gudbjartsson D.F."/>
            <person name="Bjornsson H.T."/>
            <person name="Thorsteinsdottir U."/>
            <person name="Sulem P."/>
            <person name="Stefansson K."/>
        </authorList>
    </citation>
    <scope>VARIANTS NEDMHS THR-354 AND GLU-468</scope>
    <scope>INVOLVEMENT IN NEDMHS</scope>
</reference>
<evidence type="ECO:0000250" key="1">
    <source>
        <dbReference type="UniProtKB" id="Q9QXK7"/>
    </source>
</evidence>
<evidence type="ECO:0000255" key="2"/>
<evidence type="ECO:0000269" key="3">
    <source>
    </source>
</evidence>
<evidence type="ECO:0000269" key="4">
    <source>
    </source>
</evidence>
<evidence type="ECO:0000269" key="5">
    <source>
    </source>
</evidence>
<evidence type="ECO:0000269" key="6">
    <source>
    </source>
</evidence>
<evidence type="ECO:0000269" key="7">
    <source>
    </source>
</evidence>
<evidence type="ECO:0000269" key="8">
    <source>
    </source>
</evidence>
<evidence type="ECO:0000269" key="9">
    <source>
    </source>
</evidence>
<evidence type="ECO:0000269" key="10">
    <source>
    </source>
</evidence>
<evidence type="ECO:0000269" key="11">
    <source>
    </source>
</evidence>
<evidence type="ECO:0000269" key="12">
    <source>
    </source>
</evidence>
<evidence type="ECO:0000269" key="13">
    <source>
    </source>
</evidence>
<evidence type="ECO:0000305" key="14"/>
<evidence type="ECO:0007744" key="15">
    <source>
        <dbReference type="PDB" id="2I7T"/>
    </source>
</evidence>
<evidence type="ECO:0007744" key="16">
    <source>
        <dbReference type="PDB" id="2I7V"/>
    </source>
</evidence>
<evidence type="ECO:0007744" key="17">
    <source>
    </source>
</evidence>
<evidence type="ECO:0007744" key="18">
    <source>
    </source>
</evidence>
<evidence type="ECO:0007744" key="19">
    <source>
    </source>
</evidence>
<evidence type="ECO:0007744" key="20">
    <source>
    </source>
</evidence>
<evidence type="ECO:0007829" key="21">
    <source>
        <dbReference type="PDB" id="2I7V"/>
    </source>
</evidence>
<evidence type="ECO:0007829" key="22">
    <source>
        <dbReference type="PDB" id="6M8Q"/>
    </source>
</evidence>
<evidence type="ECO:0007829" key="23">
    <source>
        <dbReference type="PDB" id="6V4X"/>
    </source>
</evidence>
<evidence type="ECO:0007829" key="24">
    <source>
        <dbReference type="PDB" id="8T1Q"/>
    </source>
</evidence>
<feature type="initiator methionine" description="Removed" evidence="17 19">
    <location>
        <position position="1"/>
    </location>
</feature>
<feature type="chain" id="PRO_0000074400" description="Cleavage and polyadenylation specificity factor subunit 3">
    <location>
        <begin position="2"/>
        <end position="684"/>
    </location>
</feature>
<feature type="active site" description="Proton donor" evidence="2">
    <location>
        <position position="396"/>
    </location>
</feature>
<feature type="binding site" evidence="7 15 16">
    <location>
        <position position="71"/>
    </location>
    <ligand>
        <name>Zn(2+)</name>
        <dbReference type="ChEBI" id="CHEBI:29105"/>
        <label>1</label>
    </ligand>
</feature>
<feature type="binding site" evidence="7 15 16">
    <location>
        <position position="73"/>
    </location>
    <ligand>
        <name>Zn(2+)</name>
        <dbReference type="ChEBI" id="CHEBI:29105"/>
        <label>1</label>
    </ligand>
</feature>
<feature type="binding site" evidence="7 15 16">
    <location>
        <position position="75"/>
    </location>
    <ligand>
        <name>Zn(2+)</name>
        <dbReference type="ChEBI" id="CHEBI:29105"/>
        <label>2</label>
    </ligand>
</feature>
<feature type="binding site" evidence="7 15 16">
    <location>
        <position position="76"/>
    </location>
    <ligand>
        <name>Zn(2+)</name>
        <dbReference type="ChEBI" id="CHEBI:29105"/>
        <label>2</label>
    </ligand>
</feature>
<feature type="binding site" evidence="7 15 16">
    <location>
        <position position="158"/>
    </location>
    <ligand>
        <name>Zn(2+)</name>
        <dbReference type="ChEBI" id="CHEBI:29105"/>
        <label>1</label>
    </ligand>
</feature>
<feature type="binding site" evidence="7 15 16">
    <location>
        <position position="179"/>
    </location>
    <ligand>
        <name>Zn(2+)</name>
        <dbReference type="ChEBI" id="CHEBI:29105"/>
        <label>1</label>
    </ligand>
</feature>
<feature type="binding site" evidence="7 15 16">
    <location>
        <position position="179"/>
    </location>
    <ligand>
        <name>Zn(2+)</name>
        <dbReference type="ChEBI" id="CHEBI:29105"/>
        <label>2</label>
    </ligand>
</feature>
<feature type="binding site" evidence="7 15 16">
    <location>
        <position position="418"/>
    </location>
    <ligand>
        <name>Zn(2+)</name>
        <dbReference type="ChEBI" id="CHEBI:29105"/>
        <label>2</label>
    </ligand>
</feature>
<feature type="modified residue" description="N-acetylserine" evidence="17 19">
    <location>
        <position position="2"/>
    </location>
</feature>
<feature type="modified residue" description="Phosphoserine" evidence="1">
    <location>
        <position position="659"/>
    </location>
</feature>
<feature type="modified residue" description="Phosphothreonine" evidence="18 20">
    <location>
        <position position="681"/>
    </location>
</feature>
<feature type="cross-link" description="Glycyl lysine isopeptide (Lys-Gly) (interchain with G-Cter in SUMO)" evidence="8">
    <location>
        <position position="462"/>
    </location>
</feature>
<feature type="cross-link" description="Glycyl lysine isopeptide (Lys-Gly) (interchain with G-Cter in SUMO)" evidence="8">
    <location>
        <position position="465"/>
    </location>
</feature>
<feature type="cross-link" description="Glycyl lysine isopeptide (Lys-Gly) (interchain with G-Cter in SUMO)" evidence="8">
    <location>
        <position position="545"/>
    </location>
</feature>
<feature type="sequence variant" id="VAR_037646" description="In dbSNP:rs17850770." evidence="5">
    <original>E</original>
    <variation>G</variation>
    <location>
        <position position="142"/>
    </location>
</feature>
<feature type="sequence variant" id="VAR_087333" description="In NEDMHS; uncertain significance; dbSNP:rs1370670757." evidence="13">
    <original>I</original>
    <variation>T</variation>
    <location>
        <position position="354"/>
    </location>
</feature>
<feature type="sequence variant" id="VAR_087334" description="In NEDMHS; dbSNP:rs765749321." evidence="13">
    <original>G</original>
    <variation>E</variation>
    <location>
        <position position="468"/>
    </location>
</feature>
<feature type="sequence variant" id="VAR_035873" description="In a breast cancer sample; somatic mutation." evidence="6">
    <original>D</original>
    <variation>N</variation>
    <location>
        <position position="578"/>
    </location>
</feature>
<feature type="mutagenesis site" description="Inhibits histone 3'-end processing." evidence="9">
    <original>H</original>
    <variation>A</variation>
    <location>
        <position position="73"/>
    </location>
</feature>
<feature type="mutagenesis site" description="Loss of histone 3'-end processing." evidence="7">
    <original>DH</original>
    <variation>KA</variation>
    <location>
        <begin position="75"/>
        <end position="76"/>
    </location>
</feature>
<feature type="mutagenesis site" description="Inhibits histone 3'-end processing." evidence="9">
    <original>D</original>
    <variation>A</variation>
    <location>
        <position position="75"/>
    </location>
</feature>
<feature type="mutagenesis site" description="Inhibits histone 3'-end processing." evidence="9">
    <original>H</original>
    <variation>A</variation>
    <location>
        <position position="76"/>
    </location>
</feature>
<feature type="mutagenesis site" description="Does not inhibit histone 3'-end processing." evidence="9">
    <original>S</original>
    <variation>A</variation>
    <location>
        <position position="334"/>
    </location>
</feature>
<feature type="mutagenesis site" description="Inhibits histone 3'-end processing." evidence="9">
    <original>H</original>
    <variation>A</variation>
    <location>
        <position position="396"/>
    </location>
</feature>
<feature type="mutagenesis site" description="Reduced sumoylation; when associated with R-465 and R-545." evidence="8">
    <original>K</original>
    <variation>R</variation>
    <location>
        <position position="462"/>
    </location>
</feature>
<feature type="mutagenesis site" description="Reduced sumoylation; when associated with R-462 and R-545." evidence="8">
    <original>K</original>
    <variation>R</variation>
    <location>
        <position position="465"/>
    </location>
</feature>
<feature type="mutagenesis site" description="Reduced sumoylation; when associated with R-462 and R-465." evidence="8">
    <original>K</original>
    <variation>R</variation>
    <location>
        <position position="545"/>
    </location>
</feature>
<feature type="strand" evidence="24">
    <location>
        <begin position="10"/>
        <end position="25"/>
    </location>
</feature>
<feature type="strand" evidence="24">
    <location>
        <begin position="27"/>
        <end position="32"/>
    </location>
</feature>
<feature type="strand" evidence="24">
    <location>
        <begin position="35"/>
        <end position="39"/>
    </location>
</feature>
<feature type="helix" evidence="24">
    <location>
        <begin position="49"/>
        <end position="52"/>
    </location>
</feature>
<feature type="helix" evidence="24">
    <location>
        <begin position="56"/>
        <end position="58"/>
    </location>
</feature>
<feature type="helix" evidence="24">
    <location>
        <begin position="61"/>
        <end position="63"/>
    </location>
</feature>
<feature type="strand" evidence="24">
    <location>
        <begin position="66"/>
        <end position="68"/>
    </location>
</feature>
<feature type="helix" evidence="24">
    <location>
        <begin position="74"/>
        <end position="77"/>
    </location>
</feature>
<feature type="helix" evidence="24">
    <location>
        <begin position="80"/>
        <end position="86"/>
    </location>
</feature>
<feature type="strand" evidence="24">
    <location>
        <begin position="91"/>
        <end position="96"/>
    </location>
</feature>
<feature type="helix" evidence="24">
    <location>
        <begin position="97"/>
        <end position="111"/>
    </location>
</feature>
<feature type="turn" evidence="22">
    <location>
        <begin position="118"/>
        <end position="120"/>
    </location>
</feature>
<feature type="helix" evidence="24">
    <location>
        <begin position="125"/>
        <end position="131"/>
    </location>
</feature>
<feature type="helix" evidence="24">
    <location>
        <begin position="132"/>
        <end position="134"/>
    </location>
</feature>
<feature type="strand" evidence="24">
    <location>
        <begin position="135"/>
        <end position="138"/>
    </location>
</feature>
<feature type="strand" evidence="24">
    <location>
        <begin position="144"/>
        <end position="146"/>
    </location>
</feature>
<feature type="strand" evidence="24">
    <location>
        <begin position="149"/>
        <end position="155"/>
    </location>
</feature>
<feature type="strand" evidence="24">
    <location>
        <begin position="163"/>
        <end position="169"/>
    </location>
</feature>
<feature type="strand" evidence="24">
    <location>
        <begin position="172"/>
        <end position="176"/>
    </location>
</feature>
<feature type="strand" evidence="21">
    <location>
        <begin position="186"/>
        <end position="188"/>
    </location>
</feature>
<feature type="strand" evidence="24">
    <location>
        <begin position="199"/>
        <end position="204"/>
    </location>
</feature>
<feature type="turn" evidence="24">
    <location>
        <begin position="206"/>
        <end position="209"/>
    </location>
</feature>
<feature type="helix" evidence="24">
    <location>
        <begin position="215"/>
        <end position="231"/>
    </location>
</feature>
<feature type="strand" evidence="24">
    <location>
        <begin position="235"/>
        <end position="239"/>
    </location>
</feature>
<feature type="strand" evidence="24">
    <location>
        <begin position="242"/>
        <end position="244"/>
    </location>
</feature>
<feature type="helix" evidence="24">
    <location>
        <begin position="245"/>
        <end position="258"/>
    </location>
</feature>
<feature type="helix" evidence="24">
    <location>
        <begin position="261"/>
        <end position="263"/>
    </location>
</feature>
<feature type="strand" evidence="24">
    <location>
        <begin position="268"/>
        <end position="271"/>
    </location>
</feature>
<feature type="helix" evidence="23">
    <location>
        <begin position="274"/>
        <end position="277"/>
    </location>
</feature>
<feature type="helix" evidence="24">
    <location>
        <begin position="281"/>
        <end position="284"/>
    </location>
</feature>
<feature type="turn" evidence="21">
    <location>
        <begin position="285"/>
        <end position="287"/>
    </location>
</feature>
<feature type="helix" evidence="22">
    <location>
        <begin position="291"/>
        <end position="296"/>
    </location>
</feature>
<feature type="turn" evidence="22">
    <location>
        <begin position="297"/>
        <end position="299"/>
    </location>
</feature>
<feature type="strand" evidence="24">
    <location>
        <begin position="306"/>
        <end position="311"/>
    </location>
</feature>
<feature type="helix" evidence="24">
    <location>
        <begin position="314"/>
        <end position="316"/>
    </location>
</feature>
<feature type="strand" evidence="24">
    <location>
        <begin position="321"/>
        <end position="328"/>
    </location>
</feature>
<feature type="helix" evidence="24">
    <location>
        <begin position="335"/>
        <end position="344"/>
    </location>
</feature>
<feature type="strand" evidence="24">
    <location>
        <begin position="351"/>
        <end position="354"/>
    </location>
</feature>
<feature type="helix" evidence="24">
    <location>
        <begin position="363"/>
        <end position="366"/>
    </location>
</feature>
<feature type="helix" evidence="24">
    <location>
        <begin position="367"/>
        <end position="369"/>
    </location>
</feature>
<feature type="strand" evidence="24">
    <location>
        <begin position="372"/>
        <end position="375"/>
    </location>
</feature>
<feature type="strand" evidence="22">
    <location>
        <begin position="377"/>
        <end position="379"/>
    </location>
</feature>
<feature type="strand" evidence="24">
    <location>
        <begin position="381"/>
        <end position="383"/>
    </location>
</feature>
<feature type="strand" evidence="24">
    <location>
        <begin position="386"/>
        <end position="390"/>
    </location>
</feature>
<feature type="helix" evidence="24">
    <location>
        <begin position="399"/>
        <end position="409"/>
    </location>
</feature>
<feature type="strand" evidence="24">
    <location>
        <begin position="412"/>
        <end position="419"/>
    </location>
</feature>
<feature type="helix" evidence="24">
    <location>
        <begin position="421"/>
        <end position="434"/>
    </location>
</feature>
<feature type="turn" evidence="24">
    <location>
        <begin position="435"/>
        <end position="437"/>
    </location>
</feature>
<feature type="strand" evidence="24">
    <location>
        <begin position="444"/>
        <end position="446"/>
    </location>
</feature>
<feature type="strand" evidence="24">
    <location>
        <begin position="454"/>
        <end position="458"/>
    </location>
</feature>
<feature type="strand" evidence="23">
    <location>
        <begin position="462"/>
        <end position="466"/>
    </location>
</feature>
<feature type="helix" evidence="23">
    <location>
        <begin position="469"/>
        <end position="471"/>
    </location>
</feature>
<feature type="strand" evidence="23">
    <location>
        <begin position="481"/>
        <end position="490"/>
    </location>
</feature>
<feature type="strand" evidence="23">
    <location>
        <begin position="492"/>
        <end position="495"/>
    </location>
</feature>
<feature type="turn" evidence="23">
    <location>
        <begin position="499"/>
        <end position="503"/>
    </location>
</feature>
<name>CPSF3_HUMAN</name>
<organism>
    <name type="scientific">Homo sapiens</name>
    <name type="common">Human</name>
    <dbReference type="NCBI Taxonomy" id="9606"/>
    <lineage>
        <taxon>Eukaryota</taxon>
        <taxon>Metazoa</taxon>
        <taxon>Chordata</taxon>
        <taxon>Craniata</taxon>
        <taxon>Vertebrata</taxon>
        <taxon>Euteleostomi</taxon>
        <taxon>Mammalia</taxon>
        <taxon>Eutheria</taxon>
        <taxon>Euarchontoglires</taxon>
        <taxon>Primates</taxon>
        <taxon>Haplorrhini</taxon>
        <taxon>Catarrhini</taxon>
        <taxon>Hominidae</taxon>
        <taxon>Homo</taxon>
    </lineage>
</organism>
<proteinExistence type="evidence at protein level"/>
<keyword id="KW-0002">3D-structure</keyword>
<keyword id="KW-0007">Acetylation</keyword>
<keyword id="KW-0225">Disease variant</keyword>
<keyword id="KW-0255">Endonuclease</keyword>
<keyword id="KW-0887">Epilepsy</keyword>
<keyword id="KW-0378">Hydrolase</keyword>
<keyword id="KW-0991">Intellectual disability</keyword>
<keyword id="KW-1017">Isopeptide bond</keyword>
<keyword id="KW-0479">Metal-binding</keyword>
<keyword id="KW-0507">mRNA processing</keyword>
<keyword id="KW-0540">Nuclease</keyword>
<keyword id="KW-0539">Nucleus</keyword>
<keyword id="KW-0597">Phosphoprotein</keyword>
<keyword id="KW-1267">Proteomics identification</keyword>
<keyword id="KW-1185">Reference proteome</keyword>
<keyword id="KW-0687">Ribonucleoprotein</keyword>
<keyword id="KW-0694">RNA-binding</keyword>
<keyword id="KW-0832">Ubl conjugation</keyword>
<keyword id="KW-0862">Zinc</keyword>
<gene>
    <name type="primary">CPSF3</name>
    <name type="synonym">CPSF73</name>
</gene>